<accession>O79785</accession>
<gene>
    <name type="primary">MT-CYB</name>
    <name type="synonym">COB</name>
    <name type="synonym">CYTB</name>
    <name type="synonym">MTCYB</name>
</gene>
<proteinExistence type="inferred from homology"/>
<comment type="function">
    <text evidence="2">Component of the ubiquinol-cytochrome c reductase complex (complex III or cytochrome b-c1 complex) that is part of the mitochondrial respiratory chain. The b-c1 complex mediates electron transfer from ubiquinol to cytochrome c. Contributes to the generation of a proton gradient across the mitochondrial membrane that is then used for ATP synthesis.</text>
</comment>
<comment type="cofactor">
    <cofactor evidence="2">
        <name>heme b</name>
        <dbReference type="ChEBI" id="CHEBI:60344"/>
    </cofactor>
    <text evidence="2">Binds 2 heme b groups non-covalently.</text>
</comment>
<comment type="subunit">
    <text evidence="2">The cytochrome bc1 complex contains 11 subunits: 3 respiratory subunits (MT-CYB, CYC1 and UQCRFS1), 2 core proteins (UQCRC1 and UQCRC2) and 6 low-molecular weight proteins (UQCRH/QCR6, UQCRB/QCR7, UQCRQ/QCR8, UQCR10/QCR9, UQCR11/QCR10 and a cleavage product of UQCRFS1). This cytochrome bc1 complex then forms a dimer.</text>
</comment>
<comment type="subcellular location">
    <subcellularLocation>
        <location evidence="2">Mitochondrion inner membrane</location>
        <topology evidence="2">Multi-pass membrane protein</topology>
    </subcellularLocation>
</comment>
<comment type="miscellaneous">
    <text evidence="1">Heme 1 (or BL or b562) is low-potential and absorbs at about 562 nm, and heme 2 (or BH or b566) is high-potential and absorbs at about 566 nm.</text>
</comment>
<comment type="similarity">
    <text evidence="3 4">Belongs to the cytochrome b family.</text>
</comment>
<comment type="caution">
    <text evidence="2">The full-length protein contains only eight transmembrane helices, not nine as predicted by bioinformatics tools.</text>
</comment>
<sequence>MALNLRKNHPLLKIVNDSLIDLPTPSNISTWWNFGSLLGICLVTQIVTGLLLATHYTADTSLAFNSVAHMCRNVQFGWLIRNLHANGASFFFICIYLHIGRGLYYGSYLNKETWNVGVILLLTLMATAFVGYVLPWGQMSFWGATVITNLFSAIPYIGQTLVEWAWGGFSVDNPTLTRFFALHFLLPFVIAGLTLVHLTFLHETGSNNPLGIPSDCDKIPFHPYYTIKDILGFALMLTSLVALALFSPNLLGDPENFTPANPLATPPHIKPEWYFLFAYAILRSIPNKLGGVLALAASILVLFLMPLLHTSKQRSMTFRPLSQILFWVLVANLLVLTWIGSQPVEQPFIIIGQLASLSYFTIILVLFPIAGVLENKLLKL</sequence>
<keyword id="KW-0249">Electron transport</keyword>
<keyword id="KW-0349">Heme</keyword>
<keyword id="KW-0408">Iron</keyword>
<keyword id="KW-0472">Membrane</keyword>
<keyword id="KW-0479">Metal-binding</keyword>
<keyword id="KW-0496">Mitochondrion</keyword>
<keyword id="KW-0999">Mitochondrion inner membrane</keyword>
<keyword id="KW-0679">Respiratory chain</keyword>
<keyword id="KW-0812">Transmembrane</keyword>
<keyword id="KW-1133">Transmembrane helix</keyword>
<keyword id="KW-0813">Transport</keyword>
<keyword id="KW-0830">Ubiquinone</keyword>
<feature type="chain" id="PRO_0000061717" description="Cytochrome b">
    <location>
        <begin position="1"/>
        <end position="380"/>
    </location>
</feature>
<feature type="transmembrane region" description="Helical" evidence="2">
    <location>
        <begin position="34"/>
        <end position="54"/>
    </location>
</feature>
<feature type="transmembrane region" description="Helical" evidence="2">
    <location>
        <begin position="78"/>
        <end position="99"/>
    </location>
</feature>
<feature type="transmembrane region" description="Helical" evidence="2">
    <location>
        <begin position="114"/>
        <end position="134"/>
    </location>
</feature>
<feature type="transmembrane region" description="Helical" evidence="2">
    <location>
        <begin position="179"/>
        <end position="199"/>
    </location>
</feature>
<feature type="transmembrane region" description="Helical" evidence="2">
    <location>
        <begin position="227"/>
        <end position="247"/>
    </location>
</feature>
<feature type="transmembrane region" description="Helical" evidence="2">
    <location>
        <begin position="289"/>
        <end position="309"/>
    </location>
</feature>
<feature type="transmembrane region" description="Helical" evidence="2">
    <location>
        <begin position="321"/>
        <end position="341"/>
    </location>
</feature>
<feature type="transmembrane region" description="Helical" evidence="2">
    <location>
        <begin position="348"/>
        <end position="368"/>
    </location>
</feature>
<feature type="binding site" description="axial binding residue" evidence="2">
    <location>
        <position position="84"/>
    </location>
    <ligand>
        <name>heme b</name>
        <dbReference type="ChEBI" id="CHEBI:60344"/>
        <label>b562</label>
    </ligand>
    <ligandPart>
        <name>Fe</name>
        <dbReference type="ChEBI" id="CHEBI:18248"/>
    </ligandPart>
</feature>
<feature type="binding site" description="axial binding residue" evidence="2">
    <location>
        <position position="98"/>
    </location>
    <ligand>
        <name>heme b</name>
        <dbReference type="ChEBI" id="CHEBI:60344"/>
        <label>b566</label>
    </ligand>
    <ligandPart>
        <name>Fe</name>
        <dbReference type="ChEBI" id="CHEBI:18248"/>
    </ligandPart>
</feature>
<feature type="binding site" description="axial binding residue" evidence="2">
    <location>
        <position position="183"/>
    </location>
    <ligand>
        <name>heme b</name>
        <dbReference type="ChEBI" id="CHEBI:60344"/>
        <label>b562</label>
    </ligand>
    <ligandPart>
        <name>Fe</name>
        <dbReference type="ChEBI" id="CHEBI:18248"/>
    </ligandPart>
</feature>
<feature type="binding site" description="axial binding residue" evidence="2">
    <location>
        <position position="197"/>
    </location>
    <ligand>
        <name>heme b</name>
        <dbReference type="ChEBI" id="CHEBI:60344"/>
        <label>b566</label>
    </ligand>
    <ligandPart>
        <name>Fe</name>
        <dbReference type="ChEBI" id="CHEBI:18248"/>
    </ligandPart>
</feature>
<feature type="binding site" evidence="2">
    <location>
        <position position="202"/>
    </location>
    <ligand>
        <name>a ubiquinone</name>
        <dbReference type="ChEBI" id="CHEBI:16389"/>
    </ligand>
</feature>
<name>CYB_VIRFL</name>
<geneLocation type="mitochondrion"/>
<organism>
    <name type="scientific">Vireo flavifrons</name>
    <name type="common">Yellow-throated vireo</name>
    <dbReference type="NCBI Taxonomy" id="81621"/>
    <lineage>
        <taxon>Eukaryota</taxon>
        <taxon>Metazoa</taxon>
        <taxon>Chordata</taxon>
        <taxon>Craniata</taxon>
        <taxon>Vertebrata</taxon>
        <taxon>Euteleostomi</taxon>
        <taxon>Archelosauria</taxon>
        <taxon>Archosauria</taxon>
        <taxon>Dinosauria</taxon>
        <taxon>Saurischia</taxon>
        <taxon>Theropoda</taxon>
        <taxon>Coelurosauria</taxon>
        <taxon>Aves</taxon>
        <taxon>Neognathae</taxon>
        <taxon>Neoaves</taxon>
        <taxon>Telluraves</taxon>
        <taxon>Australaves</taxon>
        <taxon>Passeriformes</taxon>
        <taxon>Corvoidea</taxon>
        <taxon>Vireonidae</taxon>
        <taxon>Vireoninae</taxon>
        <taxon>Vireo</taxon>
    </lineage>
</organism>
<protein>
    <recommendedName>
        <fullName>Cytochrome b</fullName>
    </recommendedName>
    <alternativeName>
        <fullName>Complex III subunit 3</fullName>
    </alternativeName>
    <alternativeName>
        <fullName>Complex III subunit III</fullName>
    </alternativeName>
    <alternativeName>
        <fullName>Cytochrome b-c1 complex subunit 3</fullName>
    </alternativeName>
    <alternativeName>
        <fullName>Ubiquinol-cytochrome-c reductase complex cytochrome b subunit</fullName>
    </alternativeName>
</protein>
<reference key="1">
    <citation type="journal article" date="1998" name="Mol. Ecol.">
        <title>Molecular phylogeny and ecological diversification in a clade of New World songbirds (genus Vireo).</title>
        <authorList>
            <person name="Cicero C."/>
            <person name="Johnson N.K."/>
        </authorList>
    </citation>
    <scope>NUCLEOTIDE SEQUENCE [GENOMIC DNA]</scope>
    <source>
        <strain>Isolate LSU B3330</strain>
        <strain>Isolate LSU B5902</strain>
    </source>
</reference>
<dbReference type="EMBL" id="AF081961">
    <property type="protein sequence ID" value="AAC62022.1"/>
    <property type="molecule type" value="Genomic_DNA"/>
</dbReference>
<dbReference type="EMBL" id="AF081962">
    <property type="protein sequence ID" value="AAC62023.1"/>
    <property type="molecule type" value="Genomic_DNA"/>
</dbReference>
<dbReference type="SMR" id="O79785"/>
<dbReference type="GO" id="GO:0005743">
    <property type="term" value="C:mitochondrial inner membrane"/>
    <property type="evidence" value="ECO:0007669"/>
    <property type="project" value="UniProtKB-SubCell"/>
</dbReference>
<dbReference type="GO" id="GO:0045275">
    <property type="term" value="C:respiratory chain complex III"/>
    <property type="evidence" value="ECO:0007669"/>
    <property type="project" value="InterPro"/>
</dbReference>
<dbReference type="GO" id="GO:0046872">
    <property type="term" value="F:metal ion binding"/>
    <property type="evidence" value="ECO:0007669"/>
    <property type="project" value="UniProtKB-KW"/>
</dbReference>
<dbReference type="GO" id="GO:0008121">
    <property type="term" value="F:ubiquinol-cytochrome-c reductase activity"/>
    <property type="evidence" value="ECO:0007669"/>
    <property type="project" value="InterPro"/>
</dbReference>
<dbReference type="GO" id="GO:0006122">
    <property type="term" value="P:mitochondrial electron transport, ubiquinol to cytochrome c"/>
    <property type="evidence" value="ECO:0007669"/>
    <property type="project" value="TreeGrafter"/>
</dbReference>
<dbReference type="CDD" id="cd00290">
    <property type="entry name" value="cytochrome_b_C"/>
    <property type="match status" value="1"/>
</dbReference>
<dbReference type="CDD" id="cd00284">
    <property type="entry name" value="Cytochrome_b_N"/>
    <property type="match status" value="1"/>
</dbReference>
<dbReference type="FunFam" id="1.20.810.10:FF:000002">
    <property type="entry name" value="Cytochrome b"/>
    <property type="match status" value="1"/>
</dbReference>
<dbReference type="Gene3D" id="1.20.810.10">
    <property type="entry name" value="Cytochrome Bc1 Complex, Chain C"/>
    <property type="match status" value="1"/>
</dbReference>
<dbReference type="InterPro" id="IPR005798">
    <property type="entry name" value="Cyt_b/b6_C"/>
</dbReference>
<dbReference type="InterPro" id="IPR036150">
    <property type="entry name" value="Cyt_b/b6_C_sf"/>
</dbReference>
<dbReference type="InterPro" id="IPR005797">
    <property type="entry name" value="Cyt_b/b6_N"/>
</dbReference>
<dbReference type="InterPro" id="IPR027387">
    <property type="entry name" value="Cytb/b6-like_sf"/>
</dbReference>
<dbReference type="InterPro" id="IPR030689">
    <property type="entry name" value="Cytochrome_b"/>
</dbReference>
<dbReference type="InterPro" id="IPR048260">
    <property type="entry name" value="Cytochrome_b_C_euk/bac"/>
</dbReference>
<dbReference type="InterPro" id="IPR048259">
    <property type="entry name" value="Cytochrome_b_N_euk/bac"/>
</dbReference>
<dbReference type="InterPro" id="IPR016174">
    <property type="entry name" value="Di-haem_cyt_TM"/>
</dbReference>
<dbReference type="PANTHER" id="PTHR19271">
    <property type="entry name" value="CYTOCHROME B"/>
    <property type="match status" value="1"/>
</dbReference>
<dbReference type="PANTHER" id="PTHR19271:SF16">
    <property type="entry name" value="CYTOCHROME B"/>
    <property type="match status" value="1"/>
</dbReference>
<dbReference type="Pfam" id="PF00032">
    <property type="entry name" value="Cytochrom_B_C"/>
    <property type="match status" value="1"/>
</dbReference>
<dbReference type="Pfam" id="PF00033">
    <property type="entry name" value="Cytochrome_B"/>
    <property type="match status" value="1"/>
</dbReference>
<dbReference type="PIRSF" id="PIRSF038885">
    <property type="entry name" value="COB"/>
    <property type="match status" value="1"/>
</dbReference>
<dbReference type="SUPFAM" id="SSF81648">
    <property type="entry name" value="a domain/subunit of cytochrome bc1 complex (Ubiquinol-cytochrome c reductase)"/>
    <property type="match status" value="1"/>
</dbReference>
<dbReference type="SUPFAM" id="SSF81342">
    <property type="entry name" value="Transmembrane di-heme cytochromes"/>
    <property type="match status" value="1"/>
</dbReference>
<dbReference type="PROSITE" id="PS51003">
    <property type="entry name" value="CYTB_CTER"/>
    <property type="match status" value="1"/>
</dbReference>
<dbReference type="PROSITE" id="PS51002">
    <property type="entry name" value="CYTB_NTER"/>
    <property type="match status" value="1"/>
</dbReference>
<evidence type="ECO:0000250" key="1"/>
<evidence type="ECO:0000250" key="2">
    <source>
        <dbReference type="UniProtKB" id="P00157"/>
    </source>
</evidence>
<evidence type="ECO:0000255" key="3">
    <source>
        <dbReference type="PROSITE-ProRule" id="PRU00967"/>
    </source>
</evidence>
<evidence type="ECO:0000255" key="4">
    <source>
        <dbReference type="PROSITE-ProRule" id="PRU00968"/>
    </source>
</evidence>